<keyword id="KW-1003">Cell membrane</keyword>
<keyword id="KW-0472">Membrane</keyword>
<keyword id="KW-1185">Reference proteome</keyword>
<keyword id="KW-0812">Transmembrane</keyword>
<keyword id="KW-1133">Transmembrane helix</keyword>
<feature type="chain" id="PRO_0000103985" description="Uncharacterized protein Rv2237">
    <location>
        <begin position="1"/>
        <end position="255"/>
    </location>
</feature>
<feature type="transmembrane region" description="Helical" evidence="1">
    <location>
        <begin position="2"/>
        <end position="22"/>
    </location>
</feature>
<feature type="transmembrane region" description="Helical" evidence="1">
    <location>
        <begin position="168"/>
        <end position="188"/>
    </location>
</feature>
<protein>
    <recommendedName>
        <fullName>Uncharacterized protein Rv2237</fullName>
    </recommendedName>
</protein>
<comment type="subcellular location">
    <subcellularLocation>
        <location evidence="2">Cell membrane</location>
        <topology evidence="2">Multi-pass membrane protein</topology>
    </subcellularLocation>
</comment>
<organism>
    <name type="scientific">Mycobacterium tuberculosis (strain ATCC 25618 / H37Rv)</name>
    <dbReference type="NCBI Taxonomy" id="83332"/>
    <lineage>
        <taxon>Bacteria</taxon>
        <taxon>Bacillati</taxon>
        <taxon>Actinomycetota</taxon>
        <taxon>Actinomycetes</taxon>
        <taxon>Mycobacteriales</taxon>
        <taxon>Mycobacteriaceae</taxon>
        <taxon>Mycobacterium</taxon>
        <taxon>Mycobacterium tuberculosis complex</taxon>
    </lineage>
</organism>
<sequence>MLLPAANVIMQLAVPGVGYGVLESPVDSGNVYKHPFKRARTTGTYLAVATIGTESDRALIRGAVDVAHRQVRSTASSPVSYNAFDPKLQLWVAACLYRYFVDQHEFLYGPLEDATADAVYQDAKRLGTTLQVPEGMWPPDRVAFDEYWKRSLDGLQIDAPVREHLRGVASVAFLPWPLRAVAGPFNLFATTGFLAPEFRAMMQLEWSQAQQRRFEWLLSVLRLADRLIPHRAWIFVYQLYLWDMRFRARHGRRIV</sequence>
<dbReference type="EMBL" id="AL123456">
    <property type="protein sequence ID" value="CCP45016.1"/>
    <property type="molecule type" value="Genomic_DNA"/>
</dbReference>
<dbReference type="PIR" id="A70778">
    <property type="entry name" value="A70778"/>
</dbReference>
<dbReference type="RefSeq" id="NP_216753.1">
    <property type="nucleotide sequence ID" value="NC_000962.3"/>
</dbReference>
<dbReference type="RefSeq" id="WP_003901356.1">
    <property type="nucleotide sequence ID" value="NC_000962.3"/>
</dbReference>
<dbReference type="SMR" id="P9WLH1"/>
<dbReference type="STRING" id="83332.Rv2237"/>
<dbReference type="PaxDb" id="83332-Rv2237"/>
<dbReference type="DNASU" id="887840"/>
<dbReference type="GeneID" id="887840"/>
<dbReference type="KEGG" id="mtu:Rv2237"/>
<dbReference type="KEGG" id="mtv:RVBD_2237"/>
<dbReference type="PATRIC" id="fig|83332.111.peg.2490"/>
<dbReference type="TubercuList" id="Rv2237"/>
<dbReference type="eggNOG" id="COG3662">
    <property type="taxonomic scope" value="Bacteria"/>
</dbReference>
<dbReference type="InParanoid" id="P9WLH1"/>
<dbReference type="OrthoDB" id="3422701at2"/>
<dbReference type="PhylomeDB" id="P9WLH1"/>
<dbReference type="Proteomes" id="UP000001584">
    <property type="component" value="Chromosome"/>
</dbReference>
<dbReference type="GO" id="GO:0005886">
    <property type="term" value="C:plasma membrane"/>
    <property type="evidence" value="ECO:0007005"/>
    <property type="project" value="MTBBASE"/>
</dbReference>
<dbReference type="GO" id="GO:0016491">
    <property type="term" value="F:oxidoreductase activity"/>
    <property type="evidence" value="ECO:0007669"/>
    <property type="project" value="InterPro"/>
</dbReference>
<dbReference type="InterPro" id="IPR018713">
    <property type="entry name" value="MPAB/Lcp_cat_dom"/>
</dbReference>
<dbReference type="PANTHER" id="PTHR36151">
    <property type="entry name" value="BLR2777 PROTEIN"/>
    <property type="match status" value="1"/>
</dbReference>
<dbReference type="PANTHER" id="PTHR36151:SF3">
    <property type="entry name" value="ER-BOUND OXYGENASE MPAB_MPAB'_RUBBER OXYGENASE CATALYTIC DOMAIN-CONTAINING PROTEIN"/>
    <property type="match status" value="1"/>
</dbReference>
<dbReference type="Pfam" id="PF09995">
    <property type="entry name" value="MPAB_Lcp_cat"/>
    <property type="match status" value="1"/>
</dbReference>
<proteinExistence type="evidence at protein level"/>
<gene>
    <name type="ordered locus">Rv2237</name>
    <name type="ORF">MTCY427.18</name>
</gene>
<evidence type="ECO:0000255" key="1"/>
<evidence type="ECO:0000305" key="2"/>
<accession>P9WLH1</accession>
<accession>L0TBX1</accession>
<accession>P64957</accession>
<accession>Q10519</accession>
<name>Y2237_MYCTU</name>
<reference key="1">
    <citation type="journal article" date="1998" name="Nature">
        <title>Deciphering the biology of Mycobacterium tuberculosis from the complete genome sequence.</title>
        <authorList>
            <person name="Cole S.T."/>
            <person name="Brosch R."/>
            <person name="Parkhill J."/>
            <person name="Garnier T."/>
            <person name="Churcher C.M."/>
            <person name="Harris D.E."/>
            <person name="Gordon S.V."/>
            <person name="Eiglmeier K."/>
            <person name="Gas S."/>
            <person name="Barry C.E. III"/>
            <person name="Tekaia F."/>
            <person name="Badcock K."/>
            <person name="Basham D."/>
            <person name="Brown D."/>
            <person name="Chillingworth T."/>
            <person name="Connor R."/>
            <person name="Davies R.M."/>
            <person name="Devlin K."/>
            <person name="Feltwell T."/>
            <person name="Gentles S."/>
            <person name="Hamlin N."/>
            <person name="Holroyd S."/>
            <person name="Hornsby T."/>
            <person name="Jagels K."/>
            <person name="Krogh A."/>
            <person name="McLean J."/>
            <person name="Moule S."/>
            <person name="Murphy L.D."/>
            <person name="Oliver S."/>
            <person name="Osborne J."/>
            <person name="Quail M.A."/>
            <person name="Rajandream M.A."/>
            <person name="Rogers J."/>
            <person name="Rutter S."/>
            <person name="Seeger K."/>
            <person name="Skelton S."/>
            <person name="Squares S."/>
            <person name="Squares R."/>
            <person name="Sulston J.E."/>
            <person name="Taylor K."/>
            <person name="Whitehead S."/>
            <person name="Barrell B.G."/>
        </authorList>
    </citation>
    <scope>NUCLEOTIDE SEQUENCE [LARGE SCALE GENOMIC DNA]</scope>
    <source>
        <strain>ATCC 25618 / H37Rv</strain>
    </source>
</reference>
<reference key="2">
    <citation type="journal article" date="2011" name="Mol. Cell. Proteomics">
        <title>Proteogenomic analysis of Mycobacterium tuberculosis by high resolution mass spectrometry.</title>
        <authorList>
            <person name="Kelkar D.S."/>
            <person name="Kumar D."/>
            <person name="Kumar P."/>
            <person name="Balakrishnan L."/>
            <person name="Muthusamy B."/>
            <person name="Yadav A.K."/>
            <person name="Shrivastava P."/>
            <person name="Marimuthu A."/>
            <person name="Anand S."/>
            <person name="Sundaram H."/>
            <person name="Kingsbury R."/>
            <person name="Harsha H.C."/>
            <person name="Nair B."/>
            <person name="Prasad T.S."/>
            <person name="Chauhan D.S."/>
            <person name="Katoch K."/>
            <person name="Katoch V.M."/>
            <person name="Kumar P."/>
            <person name="Chaerkady R."/>
            <person name="Ramachandran S."/>
            <person name="Dash D."/>
            <person name="Pandey A."/>
        </authorList>
    </citation>
    <scope>IDENTIFICATION BY MASS SPECTROMETRY [LARGE SCALE ANALYSIS]</scope>
    <source>
        <strain>ATCC 25618 / H37Rv</strain>
    </source>
</reference>